<comment type="catalytic activity">
    <reaction evidence="2">
        <text>catechol + O2 = cis,cis-muconate + 2 H(+)</text>
        <dbReference type="Rhea" id="RHEA:23852"/>
        <dbReference type="ChEBI" id="CHEBI:15378"/>
        <dbReference type="ChEBI" id="CHEBI:15379"/>
        <dbReference type="ChEBI" id="CHEBI:18135"/>
        <dbReference type="ChEBI" id="CHEBI:32379"/>
        <dbReference type="EC" id="1.13.11.1"/>
    </reaction>
</comment>
<comment type="cofactor">
    <cofactor evidence="1">
        <name>Fe(3+)</name>
        <dbReference type="ChEBI" id="CHEBI:29034"/>
    </cofactor>
    <text evidence="1">Binds 1 Fe(3+) ion per subunit.</text>
</comment>
<comment type="pathway">
    <text>Aromatic compound metabolism; beta-ketoadipate pathway; 5-oxo-4,5-dihydro-2-furylacetate from catechol: step 1/3.</text>
</comment>
<comment type="subunit">
    <text evidence="2">Homodimer.</text>
</comment>
<comment type="induction">
    <text evidence="3 4">By phenol and benzoate.</text>
</comment>
<comment type="similarity">
    <text evidence="5">Belongs to the intradiol ring-cleavage dioxygenase family.</text>
</comment>
<proteinExistence type="evidence at transcript level"/>
<protein>
    <recommendedName>
        <fullName>Catechol 1,2-dioxygenase</fullName>
        <ecNumber>1.13.11.1</ecNumber>
    </recommendedName>
</protein>
<keyword id="KW-0058">Aromatic hydrocarbons catabolism</keyword>
<keyword id="KW-0223">Dioxygenase</keyword>
<keyword id="KW-0408">Iron</keyword>
<keyword id="KW-0479">Metal-binding</keyword>
<keyword id="KW-0560">Oxidoreductase</keyword>
<accession>Q43984</accession>
<evidence type="ECO:0000250" key="1"/>
<evidence type="ECO:0000250" key="2">
    <source>
        <dbReference type="UniProtKB" id="P07773"/>
    </source>
</evidence>
<evidence type="ECO:0000269" key="3">
    <source>
    </source>
</evidence>
<evidence type="ECO:0000269" key="4">
    <source>
    </source>
</evidence>
<evidence type="ECO:0000305" key="5"/>
<reference evidence="5" key="1">
    <citation type="journal article" date="1995" name="Mol. Microbiol.">
        <title>Genetic organization, nucleotide sequence and regulation of expression of genes encoding phenol hydroxylase and catechol 1,2-dioxygenase in Acinetobacter calcoacetious.</title>
        <authorList>
            <person name="Ehrt S."/>
            <person name="Schirmer F."/>
            <person name="Hillen W."/>
        </authorList>
    </citation>
    <scope>NUCLEOTIDE SEQUENCE [GENOMIC DNA]</scope>
    <scope>INDUCTION BY PHENOL</scope>
    <source>
        <strain>ATCC 11171 / DSM 590 / CCUG 2491 / LMG 988 / NCIMB 8250 / CIP 63.46 / B94</strain>
    </source>
</reference>
<reference evidence="5" key="2">
    <citation type="journal article" date="1994" name="J. Bacteriol.">
        <title>RpoN (sigma 54) is required for conversion of phenol to catechol in Acinetobacter calcoaceticus.</title>
        <authorList>
            <person name="Ehrt S."/>
            <person name="Ornston L.N."/>
            <person name="Hillen W."/>
        </authorList>
    </citation>
    <scope>INDUCTION BY PHENOL AND BENZOATE</scope>
</reference>
<dbReference type="EC" id="1.13.11.1"/>
<dbReference type="EMBL" id="Z36909">
    <property type="protein sequence ID" value="CAA85386.1"/>
    <property type="molecule type" value="Genomic_DNA"/>
</dbReference>
<dbReference type="PIR" id="S47293">
    <property type="entry name" value="S47293"/>
</dbReference>
<dbReference type="SMR" id="Q43984"/>
<dbReference type="STRING" id="106649.GCA_000829655_03935"/>
<dbReference type="UniPathway" id="UPA00157">
    <property type="reaction ID" value="UER00258"/>
</dbReference>
<dbReference type="GO" id="GO:0018576">
    <property type="term" value="F:catechol 1,2-dioxygenase activity"/>
    <property type="evidence" value="ECO:0000250"/>
    <property type="project" value="UniProtKB"/>
</dbReference>
<dbReference type="GO" id="GO:0008199">
    <property type="term" value="F:ferric iron binding"/>
    <property type="evidence" value="ECO:0000250"/>
    <property type="project" value="UniProtKB"/>
</dbReference>
<dbReference type="GO" id="GO:0042952">
    <property type="term" value="P:beta-ketoadipate pathway"/>
    <property type="evidence" value="ECO:0007669"/>
    <property type="project" value="UniProtKB-UniPathway"/>
</dbReference>
<dbReference type="GO" id="GO:0019614">
    <property type="term" value="P:catechol-containing compound catabolic process"/>
    <property type="evidence" value="ECO:0000250"/>
    <property type="project" value="UniProtKB"/>
</dbReference>
<dbReference type="CDD" id="cd03460">
    <property type="entry name" value="1_2-CTD"/>
    <property type="match status" value="1"/>
</dbReference>
<dbReference type="FunFam" id="2.60.130.10:FF:000003">
    <property type="entry name" value="Catechol 1,2-dioxygenase"/>
    <property type="match status" value="1"/>
</dbReference>
<dbReference type="Gene3D" id="2.60.130.10">
    <property type="entry name" value="Aromatic compound dioxygenase"/>
    <property type="match status" value="1"/>
</dbReference>
<dbReference type="InterPro" id="IPR007535">
    <property type="entry name" value="Catechol_dOase_N"/>
</dbReference>
<dbReference type="InterPro" id="IPR012801">
    <property type="entry name" value="Cchol_dOase_prob"/>
</dbReference>
<dbReference type="InterPro" id="IPR000627">
    <property type="entry name" value="Intradiol_dOase_C"/>
</dbReference>
<dbReference type="InterPro" id="IPR015889">
    <property type="entry name" value="Intradiol_dOase_core"/>
</dbReference>
<dbReference type="InterPro" id="IPR050770">
    <property type="entry name" value="Intradiol_RC_Dioxygenase"/>
</dbReference>
<dbReference type="NCBIfam" id="TIGR02439">
    <property type="entry name" value="catechol_proteo"/>
    <property type="match status" value="1"/>
</dbReference>
<dbReference type="PANTHER" id="PTHR33711">
    <property type="entry name" value="DIOXYGENASE, PUTATIVE (AFU_ORTHOLOGUE AFUA_2G02910)-RELATED"/>
    <property type="match status" value="1"/>
</dbReference>
<dbReference type="PANTHER" id="PTHR33711:SF7">
    <property type="entry name" value="INTRADIOL RING-CLEAVAGE DIOXYGENASES DOMAIN-CONTAINING PROTEIN-RELATED"/>
    <property type="match status" value="1"/>
</dbReference>
<dbReference type="Pfam" id="PF00775">
    <property type="entry name" value="Dioxygenase_C"/>
    <property type="match status" value="1"/>
</dbReference>
<dbReference type="Pfam" id="PF04444">
    <property type="entry name" value="Dioxygenase_N"/>
    <property type="match status" value="1"/>
</dbReference>
<dbReference type="SUPFAM" id="SSF49482">
    <property type="entry name" value="Aromatic compound dioxygenase"/>
    <property type="match status" value="1"/>
</dbReference>
<dbReference type="PROSITE" id="PS00083">
    <property type="entry name" value="INTRADIOL_DIOXYGENAS"/>
    <property type="match status" value="1"/>
</dbReference>
<name>CATA_ACIGI</name>
<sequence>MMMNRQQIDSLVQQMNVATATGEVNLRVQQIVVRLLGDLFQAIEDLNMSQTELWKGLEYLTDAGQANELGLLAAGLGLEHYLDLRADEADAKAGITGGTPRTIEGPLYVAGAPESVGFARMDDGSESAHVDALIIEGNVTDTAGQIIPNAKVEIWHANSLGNYSFFDKSQSAFNLRRSIFTDTQGQYIAQTTMPVGYGCPPEGTTQALLNLLGRHGNRPSHVHYFVSAPGYRKLTTQFNIEGDKYLWDDFAFATRDGLIATALDVTDLAKIKQYNLNKAFKHIKFNFQLVQDADQVPLQRLIVVE</sequence>
<organism>
    <name type="scientific">Acinetobacter guillouiae</name>
    <name type="common">Acinetobacter genomosp. 11</name>
    <dbReference type="NCBI Taxonomy" id="106649"/>
    <lineage>
        <taxon>Bacteria</taxon>
        <taxon>Pseudomonadati</taxon>
        <taxon>Pseudomonadota</taxon>
        <taxon>Gammaproteobacteria</taxon>
        <taxon>Moraxellales</taxon>
        <taxon>Moraxellaceae</taxon>
        <taxon>Acinetobacter</taxon>
    </lineage>
</organism>
<gene>
    <name type="primary">catA</name>
</gene>
<feature type="chain" id="PRO_0000085080" description="Catechol 1,2-dioxygenase">
    <location>
        <begin position="1"/>
        <end position="305"/>
    </location>
</feature>
<feature type="binding site">
    <location>
        <position position="163"/>
    </location>
    <ligand>
        <name>Fe cation</name>
        <dbReference type="ChEBI" id="CHEBI:24875"/>
    </ligand>
</feature>
<feature type="binding site">
    <location>
        <position position="197"/>
    </location>
    <ligand>
        <name>Fe cation</name>
        <dbReference type="ChEBI" id="CHEBI:24875"/>
    </ligand>
</feature>
<feature type="binding site">
    <location>
        <position position="221"/>
    </location>
    <ligand>
        <name>Fe cation</name>
        <dbReference type="ChEBI" id="CHEBI:24875"/>
    </ligand>
</feature>
<feature type="binding site">
    <location>
        <position position="223"/>
    </location>
    <ligand>
        <name>Fe cation</name>
        <dbReference type="ChEBI" id="CHEBI:24875"/>
    </ligand>
</feature>